<keyword id="KW-0072">Autophagy</keyword>
<keyword id="KW-1003">Cell membrane</keyword>
<keyword id="KW-0966">Cell projection</keyword>
<keyword id="KW-0969">Cilium</keyword>
<keyword id="KW-0970">Cilium biogenesis/degradation</keyword>
<keyword id="KW-0175">Coiled coil</keyword>
<keyword id="KW-0963">Cytoplasm</keyword>
<keyword id="KW-0968">Cytoplasmic vesicle</keyword>
<keyword id="KW-0333">Golgi apparatus</keyword>
<keyword id="KW-0472">Membrane</keyword>
<keyword id="KW-0597">Phosphoprotein</keyword>
<keyword id="KW-0653">Protein transport</keyword>
<keyword id="KW-1185">Reference proteome</keyword>
<keyword id="KW-0813">Transport</keyword>
<accession>Q5R5K4</accession>
<name>SNP29_PONAB</name>
<feature type="chain" id="PRO_0000230297" description="Synaptosomal-associated protein 29">
    <location>
        <begin position="1"/>
        <end position="258"/>
    </location>
</feature>
<feature type="domain" description="t-SNARE coiled-coil homology" evidence="4">
    <location>
        <begin position="196"/>
        <end position="258"/>
    </location>
</feature>
<feature type="region of interest" description="Disordered" evidence="5">
    <location>
        <begin position="1"/>
        <end position="41"/>
    </location>
</feature>
<feature type="region of interest" description="Disordered" evidence="5">
    <location>
        <begin position="127"/>
        <end position="190"/>
    </location>
</feature>
<feature type="coiled-coil region" evidence="3">
    <location>
        <begin position="76"/>
        <end position="107"/>
    </location>
</feature>
<feature type="compositionally biased region" description="Basic and acidic residues" evidence="5">
    <location>
        <begin position="18"/>
        <end position="32"/>
    </location>
</feature>
<feature type="compositionally biased region" description="Polar residues" evidence="5">
    <location>
        <begin position="132"/>
        <end position="144"/>
    </location>
</feature>
<feature type="modified residue" description="Phosphoserine" evidence="1">
    <location>
        <position position="77"/>
    </location>
</feature>
<feature type="modified residue" description="Phosphoserine" evidence="1">
    <location>
        <position position="78"/>
    </location>
</feature>
<feature type="modified residue" description="Phosphoserine" evidence="1">
    <location>
        <position position="114"/>
    </location>
</feature>
<feature type="modified residue" description="Phosphothreonine" evidence="1">
    <location>
        <position position="130"/>
    </location>
</feature>
<feature type="modified residue" description="Phosphothreonine" evidence="1">
    <location>
        <position position="137"/>
    </location>
</feature>
<feature type="modified residue" description="Phosphoserine" evidence="1">
    <location>
        <position position="163"/>
    </location>
</feature>
<feature type="modified residue" description="Phosphoserine" evidence="1">
    <location>
        <position position="182"/>
    </location>
</feature>
<feature type="modified residue" description="Phosphoserine" evidence="1">
    <location>
        <position position="185"/>
    </location>
</feature>
<feature type="modified residue" description="Phosphoserine" evidence="1">
    <location>
        <position position="204"/>
    </location>
</feature>
<feature type="modified residue" description="Phosphoserine" evidence="1">
    <location>
        <position position="210"/>
    </location>
</feature>
<gene>
    <name evidence="1" type="primary">SNAP29</name>
</gene>
<proteinExistence type="evidence at transcript level"/>
<comment type="function">
    <text evidence="1">SNAREs, soluble N-ethylmaleimide-sensitive factor-attachment protein receptors, are essential proteins for fusion of cellular membranes. SNAREs localized on opposing membranes assemble to form a trans-SNARE complex, an extended, parallel four alpha-helical bundle that drives membrane fusion. SNAP29 is a SNARE involved in autophagy through the direct control of autophagosome membrane fusion with the lysososome membrane. Also plays a role in ciliogenesis by regulating membrane fusions.</text>
</comment>
<comment type="subunit">
    <text evidence="1 2">Forms a SNARE complex, composed of VAMP8, SNAP29 and STX17, involved in fusion of autophagosome with lysosome (By similarity). Interacts with multiple syntaxins including STX6 (By similarity). Interacts with EIPR1 (By similarity). Interacts with STX17; this interaction is increased in the absence of TMEM39A (By similarity).</text>
</comment>
<comment type="subcellular location">
    <subcellularLocation>
        <location evidence="1">Cytoplasm</location>
    </subcellularLocation>
    <subcellularLocation>
        <location evidence="2">Golgi apparatus membrane</location>
        <topology evidence="1">Peripheral membrane protein</topology>
    </subcellularLocation>
    <subcellularLocation>
        <location evidence="1">Cytoplasmic vesicle</location>
        <location evidence="1">Autophagosome membrane</location>
        <topology evidence="1">Peripheral membrane protein</topology>
    </subcellularLocation>
    <subcellularLocation>
        <location evidence="1">Cell projection</location>
        <location evidence="1">Cilium membrane</location>
        <topology evidence="1">Peripheral membrane protein</topology>
    </subcellularLocation>
    <text evidence="1">Appears to be mostly membrane-bound, probably via interaction with syntaxins, but a significant portion is cytoplasmic. Localizes to the ciliary pocket from where the cilium protrudes.</text>
</comment>
<comment type="similarity">
    <text evidence="6">Belongs to the SNAP-25 family.</text>
</comment>
<protein>
    <recommendedName>
        <fullName evidence="1">Synaptosomal-associated protein 29</fullName>
        <shortName evidence="1">SNAP-29</shortName>
    </recommendedName>
    <alternativeName>
        <fullName evidence="1">Soluble 29 kDa NSF attachment protein</fullName>
    </alternativeName>
    <alternativeName>
        <fullName>Vesicle-membrane fusion protein SNAP-29</fullName>
    </alternativeName>
</protein>
<sequence length="258" mass="28835">MSAYPKSYNPFDDDGEDEGARPAPWRDARDLPDGPDAPADRQQYLRQEVLRRAEATAASTSRSLALMYESEKVGVASSEELARQRGVLERTEKMVDKMDQDLKISQKHINSIKSVFGGLVNYFKSKPVETPPEQNGTLASQPNSRLKEAISSSKEQEAKYQASHPNLRRLDDTDPVPRGAGSAVSTDAYPKNPHLQAYHQKIDSNLDELSVGLGRLKDIALGMQTEIEEQDDILDRLTTKVDKLDVNIKSTERKVRQL</sequence>
<dbReference type="EMBL" id="CR860854">
    <property type="protein sequence ID" value="CAH92962.1"/>
    <property type="molecule type" value="mRNA"/>
</dbReference>
<dbReference type="RefSeq" id="NP_001126747.1">
    <property type="nucleotide sequence ID" value="NM_001133275.1"/>
</dbReference>
<dbReference type="SMR" id="Q5R5K4"/>
<dbReference type="FunCoup" id="Q5R5K4">
    <property type="interactions" value="2255"/>
</dbReference>
<dbReference type="STRING" id="9601.ENSPPYP00000013412"/>
<dbReference type="Ensembl" id="ENSPPYT00000052612.1">
    <property type="protein sequence ID" value="ENSPPYP00000032534.1"/>
    <property type="gene ID" value="ENSPPYG00000032205.1"/>
</dbReference>
<dbReference type="GeneID" id="100173749"/>
<dbReference type="KEGG" id="pon:100173749"/>
<dbReference type="CTD" id="9342"/>
<dbReference type="eggNOG" id="KOG3065">
    <property type="taxonomic scope" value="Eukaryota"/>
</dbReference>
<dbReference type="GeneTree" id="ENSGT00950000182843"/>
<dbReference type="HOGENOM" id="CLU_069907_1_0_1"/>
<dbReference type="InParanoid" id="Q5R5K4"/>
<dbReference type="OMA" id="NLDEMCD"/>
<dbReference type="OrthoDB" id="18679at2759"/>
<dbReference type="TreeFam" id="TF320226"/>
<dbReference type="Proteomes" id="UP000001595">
    <property type="component" value="Chromosome 22"/>
</dbReference>
<dbReference type="GO" id="GO:0005776">
    <property type="term" value="C:autophagosome"/>
    <property type="evidence" value="ECO:0000250"/>
    <property type="project" value="UniProtKB"/>
</dbReference>
<dbReference type="GO" id="GO:0000421">
    <property type="term" value="C:autophagosome membrane"/>
    <property type="evidence" value="ECO:0007669"/>
    <property type="project" value="UniProtKB-SubCell"/>
</dbReference>
<dbReference type="GO" id="GO:0005813">
    <property type="term" value="C:centrosome"/>
    <property type="evidence" value="ECO:0007669"/>
    <property type="project" value="Ensembl"/>
</dbReference>
<dbReference type="GO" id="GO:0020018">
    <property type="term" value="C:ciliary pocket membrane"/>
    <property type="evidence" value="ECO:0000250"/>
    <property type="project" value="UniProtKB"/>
</dbReference>
<dbReference type="GO" id="GO:0031410">
    <property type="term" value="C:cytoplasmic vesicle"/>
    <property type="evidence" value="ECO:0007669"/>
    <property type="project" value="UniProtKB-KW"/>
</dbReference>
<dbReference type="GO" id="GO:0005829">
    <property type="term" value="C:cytosol"/>
    <property type="evidence" value="ECO:0007669"/>
    <property type="project" value="Ensembl"/>
</dbReference>
<dbReference type="GO" id="GO:0000139">
    <property type="term" value="C:Golgi membrane"/>
    <property type="evidence" value="ECO:0007669"/>
    <property type="project" value="UniProtKB-SubCell"/>
</dbReference>
<dbReference type="GO" id="GO:0098793">
    <property type="term" value="C:presynapse"/>
    <property type="evidence" value="ECO:0007669"/>
    <property type="project" value="GOC"/>
</dbReference>
<dbReference type="GO" id="GO:0031201">
    <property type="term" value="C:SNARE complex"/>
    <property type="evidence" value="ECO:0000250"/>
    <property type="project" value="UniProtKB"/>
</dbReference>
<dbReference type="GO" id="GO:0005484">
    <property type="term" value="F:SNAP receptor activity"/>
    <property type="evidence" value="ECO:0007669"/>
    <property type="project" value="TreeGrafter"/>
</dbReference>
<dbReference type="GO" id="GO:0019905">
    <property type="term" value="F:syntaxin binding"/>
    <property type="evidence" value="ECO:0007669"/>
    <property type="project" value="TreeGrafter"/>
</dbReference>
<dbReference type="GO" id="GO:0097352">
    <property type="term" value="P:autophagosome maturation"/>
    <property type="evidence" value="ECO:0000250"/>
    <property type="project" value="UniProtKB"/>
</dbReference>
<dbReference type="GO" id="GO:0016240">
    <property type="term" value="P:autophagosome membrane docking"/>
    <property type="evidence" value="ECO:0007669"/>
    <property type="project" value="Ensembl"/>
</dbReference>
<dbReference type="GO" id="GO:0060271">
    <property type="term" value="P:cilium assembly"/>
    <property type="evidence" value="ECO:0000250"/>
    <property type="project" value="UniProtKB"/>
</dbReference>
<dbReference type="GO" id="GO:0015031">
    <property type="term" value="P:protein transport"/>
    <property type="evidence" value="ECO:0007669"/>
    <property type="project" value="UniProtKB-KW"/>
</dbReference>
<dbReference type="GO" id="GO:0031629">
    <property type="term" value="P:synaptic vesicle fusion to presynaptic active zone membrane"/>
    <property type="evidence" value="ECO:0007669"/>
    <property type="project" value="TreeGrafter"/>
</dbReference>
<dbReference type="GO" id="GO:0016082">
    <property type="term" value="P:synaptic vesicle priming"/>
    <property type="evidence" value="ECO:0007669"/>
    <property type="project" value="TreeGrafter"/>
</dbReference>
<dbReference type="CDD" id="cd15856">
    <property type="entry name" value="SNARE_SNAP29C"/>
    <property type="match status" value="1"/>
</dbReference>
<dbReference type="CDD" id="cd15887">
    <property type="entry name" value="SNARE_SNAP29N"/>
    <property type="match status" value="1"/>
</dbReference>
<dbReference type="FunFam" id="1.20.5.110:FF:000041">
    <property type="entry name" value="Synaptosomal-associated protein 29"/>
    <property type="match status" value="1"/>
</dbReference>
<dbReference type="FunFam" id="1.20.5.110:FF:000051">
    <property type="entry name" value="synaptosomal-associated protein 29"/>
    <property type="match status" value="1"/>
</dbReference>
<dbReference type="Gene3D" id="1.20.5.110">
    <property type="match status" value="2"/>
</dbReference>
<dbReference type="InterPro" id="IPR000727">
    <property type="entry name" value="T_SNARE_dom"/>
</dbReference>
<dbReference type="PANTHER" id="PTHR19305">
    <property type="entry name" value="SYNAPTOSOMAL ASSOCIATED PROTEIN"/>
    <property type="match status" value="1"/>
</dbReference>
<dbReference type="PANTHER" id="PTHR19305:SF9">
    <property type="entry name" value="SYNAPTOSOMAL-ASSOCIATED PROTEIN 29"/>
    <property type="match status" value="1"/>
</dbReference>
<dbReference type="SMART" id="SM00397">
    <property type="entry name" value="t_SNARE"/>
    <property type="match status" value="2"/>
</dbReference>
<dbReference type="SUPFAM" id="SSF58038">
    <property type="entry name" value="SNARE fusion complex"/>
    <property type="match status" value="2"/>
</dbReference>
<dbReference type="PROSITE" id="PS50192">
    <property type="entry name" value="T_SNARE"/>
    <property type="match status" value="1"/>
</dbReference>
<organism>
    <name type="scientific">Pongo abelii</name>
    <name type="common">Sumatran orangutan</name>
    <name type="synonym">Pongo pygmaeus abelii</name>
    <dbReference type="NCBI Taxonomy" id="9601"/>
    <lineage>
        <taxon>Eukaryota</taxon>
        <taxon>Metazoa</taxon>
        <taxon>Chordata</taxon>
        <taxon>Craniata</taxon>
        <taxon>Vertebrata</taxon>
        <taxon>Euteleostomi</taxon>
        <taxon>Mammalia</taxon>
        <taxon>Eutheria</taxon>
        <taxon>Euarchontoglires</taxon>
        <taxon>Primates</taxon>
        <taxon>Haplorrhini</taxon>
        <taxon>Catarrhini</taxon>
        <taxon>Hominidae</taxon>
        <taxon>Pongo</taxon>
    </lineage>
</organism>
<evidence type="ECO:0000250" key="1">
    <source>
        <dbReference type="UniProtKB" id="O95721"/>
    </source>
</evidence>
<evidence type="ECO:0000250" key="2">
    <source>
        <dbReference type="UniProtKB" id="Q9Z2P6"/>
    </source>
</evidence>
<evidence type="ECO:0000255" key="3"/>
<evidence type="ECO:0000255" key="4">
    <source>
        <dbReference type="PROSITE-ProRule" id="PRU00202"/>
    </source>
</evidence>
<evidence type="ECO:0000256" key="5">
    <source>
        <dbReference type="SAM" id="MobiDB-lite"/>
    </source>
</evidence>
<evidence type="ECO:0000305" key="6"/>
<reference key="1">
    <citation type="submission" date="2004-11" db="EMBL/GenBank/DDBJ databases">
        <authorList>
            <consortium name="The German cDNA consortium"/>
        </authorList>
    </citation>
    <scope>NUCLEOTIDE SEQUENCE [LARGE SCALE MRNA]</scope>
    <source>
        <tissue>Kidney</tissue>
    </source>
</reference>